<evidence type="ECO:0000255" key="1">
    <source>
        <dbReference type="HAMAP-Rule" id="MF_01225"/>
    </source>
</evidence>
<evidence type="ECO:0000255" key="2">
    <source>
        <dbReference type="PROSITE-ProRule" id="PRU01266"/>
    </source>
</evidence>
<gene>
    <name evidence="1" type="primary">moaA</name>
    <name type="ordered locus">Pput_1291</name>
</gene>
<sequence>MEQNSRALIDGFNRKIDYLRMSVTDRCDFRCVYCMAEDMQFLPRQQILSLEELFQVAERFVALGTRKIRLTGGEPLVRQGIVDLCGRIAALPGLRELCLTSNGSQLGRLAQPLFDAGVTRLNISLDSLDADRFKQLTRTGDLAQVIAGIDAARQAGFRRTKLNCVVLKGRNDHELVDLVRFAIERELDITFIEEMPLGVISEHERGESFCSSDEVRARLAEQFTLVESTESSMGPARYWRLAEAANTRVGFISPHSHNFCATCNRVRLTVEGRLLLCLGNEHSVDLKHVLRAHPGNPERLEKAIRDSLHLKPYRHHFEVGGDVQILRFMNMTGG</sequence>
<keyword id="KW-0004">4Fe-4S</keyword>
<keyword id="KW-0342">GTP-binding</keyword>
<keyword id="KW-0408">Iron</keyword>
<keyword id="KW-0411">Iron-sulfur</keyword>
<keyword id="KW-0456">Lyase</keyword>
<keyword id="KW-0479">Metal-binding</keyword>
<keyword id="KW-0501">Molybdenum cofactor biosynthesis</keyword>
<keyword id="KW-0547">Nucleotide-binding</keyword>
<keyword id="KW-0949">S-adenosyl-L-methionine</keyword>
<organism>
    <name type="scientific">Pseudomonas putida (strain ATCC 700007 / DSM 6899 / JCM 31910 / BCRC 17059 / LMG 24140 / F1)</name>
    <dbReference type="NCBI Taxonomy" id="351746"/>
    <lineage>
        <taxon>Bacteria</taxon>
        <taxon>Pseudomonadati</taxon>
        <taxon>Pseudomonadota</taxon>
        <taxon>Gammaproteobacteria</taxon>
        <taxon>Pseudomonadales</taxon>
        <taxon>Pseudomonadaceae</taxon>
        <taxon>Pseudomonas</taxon>
    </lineage>
</organism>
<proteinExistence type="inferred from homology"/>
<feature type="chain" id="PRO_1000054214" description="GTP 3',8-cyclase">
    <location>
        <begin position="1"/>
        <end position="334"/>
    </location>
</feature>
<feature type="domain" description="Radical SAM core" evidence="2">
    <location>
        <begin position="11"/>
        <end position="236"/>
    </location>
</feature>
<feature type="binding site" evidence="1">
    <location>
        <position position="20"/>
    </location>
    <ligand>
        <name>GTP</name>
        <dbReference type="ChEBI" id="CHEBI:37565"/>
    </ligand>
</feature>
<feature type="binding site" evidence="1">
    <location>
        <position position="27"/>
    </location>
    <ligand>
        <name>[4Fe-4S] cluster</name>
        <dbReference type="ChEBI" id="CHEBI:49883"/>
        <label>1</label>
        <note>4Fe-4S-S-AdoMet</note>
    </ligand>
</feature>
<feature type="binding site" evidence="1">
    <location>
        <position position="31"/>
    </location>
    <ligand>
        <name>[4Fe-4S] cluster</name>
        <dbReference type="ChEBI" id="CHEBI:49883"/>
        <label>1</label>
        <note>4Fe-4S-S-AdoMet</note>
    </ligand>
</feature>
<feature type="binding site" evidence="1">
    <location>
        <position position="33"/>
    </location>
    <ligand>
        <name>S-adenosyl-L-methionine</name>
        <dbReference type="ChEBI" id="CHEBI:59789"/>
    </ligand>
</feature>
<feature type="binding site" evidence="1">
    <location>
        <position position="34"/>
    </location>
    <ligand>
        <name>[4Fe-4S] cluster</name>
        <dbReference type="ChEBI" id="CHEBI:49883"/>
        <label>1</label>
        <note>4Fe-4S-S-AdoMet</note>
    </ligand>
</feature>
<feature type="binding site" evidence="1">
    <location>
        <position position="69"/>
    </location>
    <ligand>
        <name>GTP</name>
        <dbReference type="ChEBI" id="CHEBI:37565"/>
    </ligand>
</feature>
<feature type="binding site" evidence="1">
    <location>
        <position position="73"/>
    </location>
    <ligand>
        <name>S-adenosyl-L-methionine</name>
        <dbReference type="ChEBI" id="CHEBI:59789"/>
    </ligand>
</feature>
<feature type="binding site" evidence="1">
    <location>
        <position position="100"/>
    </location>
    <ligand>
        <name>GTP</name>
        <dbReference type="ChEBI" id="CHEBI:37565"/>
    </ligand>
</feature>
<feature type="binding site" evidence="1">
    <location>
        <position position="124"/>
    </location>
    <ligand>
        <name>S-adenosyl-L-methionine</name>
        <dbReference type="ChEBI" id="CHEBI:59789"/>
    </ligand>
</feature>
<feature type="binding site" evidence="1">
    <location>
        <position position="161"/>
    </location>
    <ligand>
        <name>GTP</name>
        <dbReference type="ChEBI" id="CHEBI:37565"/>
    </ligand>
</feature>
<feature type="binding site" evidence="1">
    <location>
        <position position="195"/>
    </location>
    <ligand>
        <name>S-adenosyl-L-methionine</name>
        <dbReference type="ChEBI" id="CHEBI:59789"/>
    </ligand>
</feature>
<feature type="binding site" evidence="1">
    <location>
        <position position="260"/>
    </location>
    <ligand>
        <name>[4Fe-4S] cluster</name>
        <dbReference type="ChEBI" id="CHEBI:49883"/>
        <label>2</label>
        <note>4Fe-4S-substrate</note>
    </ligand>
</feature>
<feature type="binding site" evidence="1">
    <location>
        <position position="263"/>
    </location>
    <ligand>
        <name>[4Fe-4S] cluster</name>
        <dbReference type="ChEBI" id="CHEBI:49883"/>
        <label>2</label>
        <note>4Fe-4S-substrate</note>
    </ligand>
</feature>
<feature type="binding site" evidence="1">
    <location>
        <begin position="265"/>
        <end position="267"/>
    </location>
    <ligand>
        <name>GTP</name>
        <dbReference type="ChEBI" id="CHEBI:37565"/>
    </ligand>
</feature>
<feature type="binding site" evidence="1">
    <location>
        <position position="277"/>
    </location>
    <ligand>
        <name>[4Fe-4S] cluster</name>
        <dbReference type="ChEBI" id="CHEBI:49883"/>
        <label>2</label>
        <note>4Fe-4S-substrate</note>
    </ligand>
</feature>
<accession>A5VZZ2</accession>
<dbReference type="EC" id="4.1.99.22" evidence="1"/>
<dbReference type="EMBL" id="CP000712">
    <property type="protein sequence ID" value="ABQ77452.1"/>
    <property type="molecule type" value="Genomic_DNA"/>
</dbReference>
<dbReference type="SMR" id="A5VZZ2"/>
<dbReference type="KEGG" id="ppf:Pput_1291"/>
<dbReference type="eggNOG" id="COG2896">
    <property type="taxonomic scope" value="Bacteria"/>
</dbReference>
<dbReference type="HOGENOM" id="CLU_009273_0_1_6"/>
<dbReference type="UniPathway" id="UPA00344"/>
<dbReference type="GO" id="GO:0051539">
    <property type="term" value="F:4 iron, 4 sulfur cluster binding"/>
    <property type="evidence" value="ECO:0007669"/>
    <property type="project" value="UniProtKB-UniRule"/>
</dbReference>
<dbReference type="GO" id="GO:0061799">
    <property type="term" value="F:cyclic pyranopterin monophosphate synthase activity"/>
    <property type="evidence" value="ECO:0007669"/>
    <property type="project" value="TreeGrafter"/>
</dbReference>
<dbReference type="GO" id="GO:0061798">
    <property type="term" value="F:GTP 3',8'-cyclase activity"/>
    <property type="evidence" value="ECO:0007669"/>
    <property type="project" value="UniProtKB-UniRule"/>
</dbReference>
<dbReference type="GO" id="GO:0005525">
    <property type="term" value="F:GTP binding"/>
    <property type="evidence" value="ECO:0007669"/>
    <property type="project" value="UniProtKB-UniRule"/>
</dbReference>
<dbReference type="GO" id="GO:0046872">
    <property type="term" value="F:metal ion binding"/>
    <property type="evidence" value="ECO:0007669"/>
    <property type="project" value="UniProtKB-KW"/>
</dbReference>
<dbReference type="GO" id="GO:1904047">
    <property type="term" value="F:S-adenosyl-L-methionine binding"/>
    <property type="evidence" value="ECO:0007669"/>
    <property type="project" value="UniProtKB-UniRule"/>
</dbReference>
<dbReference type="GO" id="GO:0006777">
    <property type="term" value="P:Mo-molybdopterin cofactor biosynthetic process"/>
    <property type="evidence" value="ECO:0007669"/>
    <property type="project" value="UniProtKB-UniRule"/>
</dbReference>
<dbReference type="CDD" id="cd01335">
    <property type="entry name" value="Radical_SAM"/>
    <property type="match status" value="1"/>
</dbReference>
<dbReference type="CDD" id="cd21117">
    <property type="entry name" value="Twitch_MoaA"/>
    <property type="match status" value="1"/>
</dbReference>
<dbReference type="Gene3D" id="3.20.20.70">
    <property type="entry name" value="Aldolase class I"/>
    <property type="match status" value="1"/>
</dbReference>
<dbReference type="HAMAP" id="MF_01225_B">
    <property type="entry name" value="MoaA_B"/>
    <property type="match status" value="1"/>
</dbReference>
<dbReference type="InterPro" id="IPR013785">
    <property type="entry name" value="Aldolase_TIM"/>
</dbReference>
<dbReference type="InterPro" id="IPR006638">
    <property type="entry name" value="Elp3/MiaA/NifB-like_rSAM"/>
</dbReference>
<dbReference type="InterPro" id="IPR013483">
    <property type="entry name" value="MoaA"/>
</dbReference>
<dbReference type="InterPro" id="IPR000385">
    <property type="entry name" value="MoaA_NifB_PqqE_Fe-S-bd_CS"/>
</dbReference>
<dbReference type="InterPro" id="IPR010505">
    <property type="entry name" value="MoaA_twitch"/>
</dbReference>
<dbReference type="InterPro" id="IPR050105">
    <property type="entry name" value="MoCo_biosynth_MoaA/MoaC"/>
</dbReference>
<dbReference type="InterPro" id="IPR007197">
    <property type="entry name" value="rSAM"/>
</dbReference>
<dbReference type="NCBIfam" id="TIGR02666">
    <property type="entry name" value="moaA"/>
    <property type="match status" value="1"/>
</dbReference>
<dbReference type="PANTHER" id="PTHR22960:SF0">
    <property type="entry name" value="MOLYBDENUM COFACTOR BIOSYNTHESIS PROTEIN 1"/>
    <property type="match status" value="1"/>
</dbReference>
<dbReference type="PANTHER" id="PTHR22960">
    <property type="entry name" value="MOLYBDOPTERIN COFACTOR SYNTHESIS PROTEIN A"/>
    <property type="match status" value="1"/>
</dbReference>
<dbReference type="Pfam" id="PF13353">
    <property type="entry name" value="Fer4_12"/>
    <property type="match status" value="1"/>
</dbReference>
<dbReference type="Pfam" id="PF06463">
    <property type="entry name" value="Mob_synth_C"/>
    <property type="match status" value="1"/>
</dbReference>
<dbReference type="Pfam" id="PF04055">
    <property type="entry name" value="Radical_SAM"/>
    <property type="match status" value="1"/>
</dbReference>
<dbReference type="SFLD" id="SFLDG01383">
    <property type="entry name" value="cyclic_pyranopterin_phosphate"/>
    <property type="match status" value="1"/>
</dbReference>
<dbReference type="SFLD" id="SFLDG01216">
    <property type="entry name" value="thioether_bond_formation_requi"/>
    <property type="match status" value="1"/>
</dbReference>
<dbReference type="SMART" id="SM00729">
    <property type="entry name" value="Elp3"/>
    <property type="match status" value="1"/>
</dbReference>
<dbReference type="SUPFAM" id="SSF102114">
    <property type="entry name" value="Radical SAM enzymes"/>
    <property type="match status" value="1"/>
</dbReference>
<dbReference type="PROSITE" id="PS01305">
    <property type="entry name" value="MOAA_NIFB_PQQE"/>
    <property type="match status" value="1"/>
</dbReference>
<dbReference type="PROSITE" id="PS51918">
    <property type="entry name" value="RADICAL_SAM"/>
    <property type="match status" value="1"/>
</dbReference>
<reference key="1">
    <citation type="submission" date="2007-05" db="EMBL/GenBank/DDBJ databases">
        <title>Complete sequence of Pseudomonas putida F1.</title>
        <authorList>
            <consortium name="US DOE Joint Genome Institute"/>
            <person name="Copeland A."/>
            <person name="Lucas S."/>
            <person name="Lapidus A."/>
            <person name="Barry K."/>
            <person name="Detter J.C."/>
            <person name="Glavina del Rio T."/>
            <person name="Hammon N."/>
            <person name="Israni S."/>
            <person name="Dalin E."/>
            <person name="Tice H."/>
            <person name="Pitluck S."/>
            <person name="Chain P."/>
            <person name="Malfatti S."/>
            <person name="Shin M."/>
            <person name="Vergez L."/>
            <person name="Schmutz J."/>
            <person name="Larimer F."/>
            <person name="Land M."/>
            <person name="Hauser L."/>
            <person name="Kyrpides N."/>
            <person name="Lykidis A."/>
            <person name="Parales R."/>
            <person name="Richardson P."/>
        </authorList>
    </citation>
    <scope>NUCLEOTIDE SEQUENCE [LARGE SCALE GENOMIC DNA]</scope>
    <source>
        <strain>ATCC 700007 / DSM 6899 / JCM 31910 / BCRC 17059 / LMG 24140 / F1</strain>
    </source>
</reference>
<name>MOAA_PSEP1</name>
<comment type="function">
    <text evidence="1">Catalyzes the cyclization of GTP to (8S)-3',8-cyclo-7,8-dihydroguanosine 5'-triphosphate.</text>
</comment>
<comment type="catalytic activity">
    <reaction evidence="1">
        <text>GTP + AH2 + S-adenosyl-L-methionine = (8S)-3',8-cyclo-7,8-dihydroguanosine 5'-triphosphate + 5'-deoxyadenosine + L-methionine + A + H(+)</text>
        <dbReference type="Rhea" id="RHEA:49576"/>
        <dbReference type="ChEBI" id="CHEBI:13193"/>
        <dbReference type="ChEBI" id="CHEBI:15378"/>
        <dbReference type="ChEBI" id="CHEBI:17319"/>
        <dbReference type="ChEBI" id="CHEBI:17499"/>
        <dbReference type="ChEBI" id="CHEBI:37565"/>
        <dbReference type="ChEBI" id="CHEBI:57844"/>
        <dbReference type="ChEBI" id="CHEBI:59789"/>
        <dbReference type="ChEBI" id="CHEBI:131766"/>
        <dbReference type="EC" id="4.1.99.22"/>
    </reaction>
</comment>
<comment type="cofactor">
    <cofactor evidence="1">
        <name>[4Fe-4S] cluster</name>
        <dbReference type="ChEBI" id="CHEBI:49883"/>
    </cofactor>
    <text evidence="1">Binds 2 [4Fe-4S] clusters. Binds 1 [4Fe-4S] cluster coordinated with 3 cysteines and an exchangeable S-adenosyl-L-methionine and 1 [4Fe-4S] cluster coordinated with 3 cysteines and the GTP-derived substrate.</text>
</comment>
<comment type="pathway">
    <text evidence="1">Cofactor biosynthesis; molybdopterin biosynthesis.</text>
</comment>
<comment type="subunit">
    <text evidence="1">Monomer and homodimer.</text>
</comment>
<comment type="similarity">
    <text evidence="1">Belongs to the radical SAM superfamily. MoaA family.</text>
</comment>
<protein>
    <recommendedName>
        <fullName evidence="1">GTP 3',8-cyclase</fullName>
        <ecNumber evidence="1">4.1.99.22</ecNumber>
    </recommendedName>
    <alternativeName>
        <fullName evidence="1">Molybdenum cofactor biosynthesis protein A</fullName>
    </alternativeName>
</protein>